<name>LEUC_ACTP2</name>
<proteinExistence type="inferred from homology"/>
<reference key="1">
    <citation type="journal article" date="2008" name="J. Bacteriol.">
        <title>The complete genome sequence of Actinobacillus pleuropneumoniae L20 (serotype 5b).</title>
        <authorList>
            <person name="Foote S.J."/>
            <person name="Bosse J.T."/>
            <person name="Bouevitch A.B."/>
            <person name="Langford P.R."/>
            <person name="Young N.M."/>
            <person name="Nash J.H.E."/>
        </authorList>
    </citation>
    <scope>NUCLEOTIDE SEQUENCE [LARGE SCALE GENOMIC DNA]</scope>
    <source>
        <strain>L20</strain>
    </source>
</reference>
<protein>
    <recommendedName>
        <fullName evidence="1">3-isopropylmalate dehydratase large subunit</fullName>
        <ecNumber evidence="1">4.2.1.33</ecNumber>
    </recommendedName>
    <alternativeName>
        <fullName evidence="1">Alpha-IPM isomerase</fullName>
        <shortName evidence="1">IPMI</shortName>
    </alternativeName>
    <alternativeName>
        <fullName evidence="1">Isopropylmalate isomerase</fullName>
    </alternativeName>
</protein>
<dbReference type="EC" id="4.2.1.33" evidence="1"/>
<dbReference type="EMBL" id="CP000569">
    <property type="protein sequence ID" value="ABN73247.1"/>
    <property type="molecule type" value="Genomic_DNA"/>
</dbReference>
<dbReference type="RefSeq" id="WP_011848321.1">
    <property type="nucleotide sequence ID" value="NC_009053.1"/>
</dbReference>
<dbReference type="SMR" id="A3MYL1"/>
<dbReference type="STRING" id="416269.APL_0139"/>
<dbReference type="EnsemblBacteria" id="ABN73247">
    <property type="protein sequence ID" value="ABN73247"/>
    <property type="gene ID" value="APL_0139"/>
</dbReference>
<dbReference type="KEGG" id="apl:APL_0139"/>
<dbReference type="PATRIC" id="fig|416269.6.peg.143"/>
<dbReference type="eggNOG" id="COG0065">
    <property type="taxonomic scope" value="Bacteria"/>
</dbReference>
<dbReference type="HOGENOM" id="CLU_006714_3_4_6"/>
<dbReference type="UniPathway" id="UPA00048">
    <property type="reaction ID" value="UER00071"/>
</dbReference>
<dbReference type="Proteomes" id="UP000001432">
    <property type="component" value="Chromosome"/>
</dbReference>
<dbReference type="GO" id="GO:0003861">
    <property type="term" value="F:3-isopropylmalate dehydratase activity"/>
    <property type="evidence" value="ECO:0007669"/>
    <property type="project" value="UniProtKB-UniRule"/>
</dbReference>
<dbReference type="GO" id="GO:0051539">
    <property type="term" value="F:4 iron, 4 sulfur cluster binding"/>
    <property type="evidence" value="ECO:0007669"/>
    <property type="project" value="UniProtKB-KW"/>
</dbReference>
<dbReference type="GO" id="GO:0046872">
    <property type="term" value="F:metal ion binding"/>
    <property type="evidence" value="ECO:0007669"/>
    <property type="project" value="UniProtKB-KW"/>
</dbReference>
<dbReference type="GO" id="GO:0009098">
    <property type="term" value="P:L-leucine biosynthetic process"/>
    <property type="evidence" value="ECO:0007669"/>
    <property type="project" value="UniProtKB-UniRule"/>
</dbReference>
<dbReference type="CDD" id="cd01583">
    <property type="entry name" value="IPMI"/>
    <property type="match status" value="1"/>
</dbReference>
<dbReference type="FunFam" id="3.30.499.10:FF:000006">
    <property type="entry name" value="3-isopropylmalate dehydratase large subunit"/>
    <property type="match status" value="1"/>
</dbReference>
<dbReference type="FunFam" id="3.30.499.10:FF:000007">
    <property type="entry name" value="3-isopropylmalate dehydratase large subunit"/>
    <property type="match status" value="1"/>
</dbReference>
<dbReference type="Gene3D" id="3.30.499.10">
    <property type="entry name" value="Aconitase, domain 3"/>
    <property type="match status" value="2"/>
</dbReference>
<dbReference type="HAMAP" id="MF_01026">
    <property type="entry name" value="LeuC_type1"/>
    <property type="match status" value="1"/>
</dbReference>
<dbReference type="InterPro" id="IPR004430">
    <property type="entry name" value="3-IsopropMal_deHydase_lsu"/>
</dbReference>
<dbReference type="InterPro" id="IPR015931">
    <property type="entry name" value="Acnase/IPM_dHydase_lsu_aba_1/3"/>
</dbReference>
<dbReference type="InterPro" id="IPR001030">
    <property type="entry name" value="Acoase/IPM_deHydtase_lsu_aba"/>
</dbReference>
<dbReference type="InterPro" id="IPR018136">
    <property type="entry name" value="Aconitase_4Fe-4S_BS"/>
</dbReference>
<dbReference type="InterPro" id="IPR036008">
    <property type="entry name" value="Aconitase_4Fe-4S_dom"/>
</dbReference>
<dbReference type="InterPro" id="IPR050067">
    <property type="entry name" value="IPM_dehydratase_rel_enz"/>
</dbReference>
<dbReference type="InterPro" id="IPR033941">
    <property type="entry name" value="IPMI_cat"/>
</dbReference>
<dbReference type="NCBIfam" id="TIGR00170">
    <property type="entry name" value="leuC"/>
    <property type="match status" value="1"/>
</dbReference>
<dbReference type="NCBIfam" id="NF004016">
    <property type="entry name" value="PRK05478.1"/>
    <property type="match status" value="1"/>
</dbReference>
<dbReference type="NCBIfam" id="NF009116">
    <property type="entry name" value="PRK12466.1"/>
    <property type="match status" value="1"/>
</dbReference>
<dbReference type="PANTHER" id="PTHR43822:SF9">
    <property type="entry name" value="3-ISOPROPYLMALATE DEHYDRATASE"/>
    <property type="match status" value="1"/>
</dbReference>
<dbReference type="PANTHER" id="PTHR43822">
    <property type="entry name" value="HOMOACONITASE, MITOCHONDRIAL-RELATED"/>
    <property type="match status" value="1"/>
</dbReference>
<dbReference type="Pfam" id="PF00330">
    <property type="entry name" value="Aconitase"/>
    <property type="match status" value="1"/>
</dbReference>
<dbReference type="PRINTS" id="PR00415">
    <property type="entry name" value="ACONITASE"/>
</dbReference>
<dbReference type="SUPFAM" id="SSF53732">
    <property type="entry name" value="Aconitase iron-sulfur domain"/>
    <property type="match status" value="1"/>
</dbReference>
<dbReference type="PROSITE" id="PS00450">
    <property type="entry name" value="ACONITASE_1"/>
    <property type="match status" value="1"/>
</dbReference>
<dbReference type="PROSITE" id="PS01244">
    <property type="entry name" value="ACONITASE_2"/>
    <property type="match status" value="1"/>
</dbReference>
<gene>
    <name evidence="1" type="primary">leuC</name>
    <name type="ordered locus">APL_0139</name>
</gene>
<organism>
    <name type="scientific">Actinobacillus pleuropneumoniae serotype 5b (strain L20)</name>
    <dbReference type="NCBI Taxonomy" id="416269"/>
    <lineage>
        <taxon>Bacteria</taxon>
        <taxon>Pseudomonadati</taxon>
        <taxon>Pseudomonadota</taxon>
        <taxon>Gammaproteobacteria</taxon>
        <taxon>Pasteurellales</taxon>
        <taxon>Pasteurellaceae</taxon>
        <taxon>Actinobacillus</taxon>
    </lineage>
</organism>
<accession>A3MYL1</accession>
<feature type="chain" id="PRO_1000063519" description="3-isopropylmalate dehydratase large subunit">
    <location>
        <begin position="1"/>
        <end position="469"/>
    </location>
</feature>
<feature type="binding site" evidence="1">
    <location>
        <position position="347"/>
    </location>
    <ligand>
        <name>[4Fe-4S] cluster</name>
        <dbReference type="ChEBI" id="CHEBI:49883"/>
    </ligand>
</feature>
<feature type="binding site" evidence="1">
    <location>
        <position position="408"/>
    </location>
    <ligand>
        <name>[4Fe-4S] cluster</name>
        <dbReference type="ChEBI" id="CHEBI:49883"/>
    </ligand>
</feature>
<feature type="binding site" evidence="1">
    <location>
        <position position="411"/>
    </location>
    <ligand>
        <name>[4Fe-4S] cluster</name>
        <dbReference type="ChEBI" id="CHEBI:49883"/>
    </ligand>
</feature>
<comment type="function">
    <text evidence="1">Catalyzes the isomerization between 2-isopropylmalate and 3-isopropylmalate, via the formation of 2-isopropylmaleate.</text>
</comment>
<comment type="catalytic activity">
    <reaction evidence="1">
        <text>(2R,3S)-3-isopropylmalate = (2S)-2-isopropylmalate</text>
        <dbReference type="Rhea" id="RHEA:32287"/>
        <dbReference type="ChEBI" id="CHEBI:1178"/>
        <dbReference type="ChEBI" id="CHEBI:35121"/>
        <dbReference type="EC" id="4.2.1.33"/>
    </reaction>
</comment>
<comment type="cofactor">
    <cofactor evidence="1">
        <name>[4Fe-4S] cluster</name>
        <dbReference type="ChEBI" id="CHEBI:49883"/>
    </cofactor>
    <text evidence="1">Binds 1 [4Fe-4S] cluster per subunit.</text>
</comment>
<comment type="pathway">
    <text evidence="1">Amino-acid biosynthesis; L-leucine biosynthesis; L-leucine from 3-methyl-2-oxobutanoate: step 2/4.</text>
</comment>
<comment type="subunit">
    <text evidence="1">Heterodimer of LeuC and LeuD.</text>
</comment>
<comment type="similarity">
    <text evidence="1">Belongs to the aconitase/IPM isomerase family. LeuC type 1 subfamily.</text>
</comment>
<evidence type="ECO:0000255" key="1">
    <source>
        <dbReference type="HAMAP-Rule" id="MF_01026"/>
    </source>
</evidence>
<sequence>MAKTLYEKLFDAHVVYEAAGETPILYINRHLIHEVTSPQAFDGLRVAGRQVRQIGKTFGTMDHSISTQVRDVNKLEGQAKIQVLELAKNCEANGISLFDMQTKEQGIVHVMGPEQGLTLPGMTIVCGDSHTATHGAFGALAFGIGTSEVEHVLATQTLKQARAKSMKVEVRGKVNPGITAKDIVLAIIGKTTMAGGTGHVVEFCGEAIRNLSMEGRMTVCNMAIEFGAKAGLVAPDETTFAYLKDRPHAPKGKDWDDAVEYWTTLKSDDDAVFDSVVVLEAKDIAPQVTWGTNPGQVIGIDQVVPNPQEMADPVTKASAEKALAYIGLDANTDMKNIPVDQVFIGSCTNSRIEDLRAAAAVMKGRKKADNVKRVLVVPGSGLVKEQAEKEGLDKIFIEAGAEWRNPGCSMCLGMNDDRLGEWERCASTSNRNFEGRQGRNGRTHLVSPAMAAAAAMFGKFVDIRHVELN</sequence>
<keyword id="KW-0004">4Fe-4S</keyword>
<keyword id="KW-0028">Amino-acid biosynthesis</keyword>
<keyword id="KW-0100">Branched-chain amino acid biosynthesis</keyword>
<keyword id="KW-0408">Iron</keyword>
<keyword id="KW-0411">Iron-sulfur</keyword>
<keyword id="KW-0432">Leucine biosynthesis</keyword>
<keyword id="KW-0456">Lyase</keyword>
<keyword id="KW-0479">Metal-binding</keyword>
<keyword id="KW-1185">Reference proteome</keyword>